<evidence type="ECO:0000255" key="1">
    <source>
        <dbReference type="HAMAP-Rule" id="MF_00433"/>
    </source>
</evidence>
<evidence type="ECO:0007829" key="2">
    <source>
        <dbReference type="PDB" id="4OGQ"/>
    </source>
</evidence>
<comment type="function">
    <text evidence="1">Component of the cytochrome b6-f complex, which mediates electron transfer between photosystem II (PSII) and photosystem I (PSI), cyclic electron flow around PSI, and state transitions. PetL is important for photoautotrophic growth as well as for electron transfer efficiency and stability of the cytochrome b6-f complex.</text>
</comment>
<comment type="subunit">
    <text evidence="1">The 4 large subunits of the cytochrome b6-f complex are cytochrome b6, subunit IV (17 kDa polypeptide, PetD), cytochrome f and the Rieske protein, while the 4 small subunits are PetG, PetL, PetM and PetN. The complex functions as a dimer.</text>
</comment>
<comment type="subcellular location">
    <subcellularLocation>
        <location evidence="1">Cellular thylakoid membrane</location>
        <topology evidence="1">Single-pass membrane protein</topology>
    </subcellularLocation>
</comment>
<comment type="similarity">
    <text evidence="1">Belongs to the PetL family.</text>
</comment>
<sequence>MLAIVAYIGFLALFTGIAAGLLFGLRSAKIL</sequence>
<protein>
    <recommendedName>
        <fullName evidence="1">Cytochrome b6-f complex subunit 6</fullName>
    </recommendedName>
    <alternativeName>
        <fullName evidence="1">Cytochrome b6-f complex subunit PetL</fullName>
    </alternativeName>
    <alternativeName>
        <fullName evidence="1">Cytochrome b6-f complex subunit VI</fullName>
    </alternativeName>
</protein>
<feature type="chain" id="PRO_0000220485" description="Cytochrome b6-f complex subunit 6">
    <location>
        <begin position="1"/>
        <end position="31"/>
    </location>
</feature>
<feature type="transmembrane region" description="Helical" evidence="1">
    <location>
        <begin position="3"/>
        <end position="23"/>
    </location>
</feature>
<feature type="helix" evidence="2">
    <location>
        <begin position="2"/>
        <end position="27"/>
    </location>
</feature>
<reference key="1">
    <citation type="journal article" date="2001" name="DNA Res.">
        <title>Complete genomic sequence of the filamentous nitrogen-fixing cyanobacterium Anabaena sp. strain PCC 7120.</title>
        <authorList>
            <person name="Kaneko T."/>
            <person name="Nakamura Y."/>
            <person name="Wolk C.P."/>
            <person name="Kuritz T."/>
            <person name="Sasamoto S."/>
            <person name="Watanabe A."/>
            <person name="Iriguchi M."/>
            <person name="Ishikawa A."/>
            <person name="Kawashima K."/>
            <person name="Kimura T."/>
            <person name="Kishida Y."/>
            <person name="Kohara M."/>
            <person name="Matsumoto M."/>
            <person name="Matsuno A."/>
            <person name="Muraki A."/>
            <person name="Nakazaki N."/>
            <person name="Shimpo S."/>
            <person name="Sugimoto M."/>
            <person name="Takazawa M."/>
            <person name="Yamada M."/>
            <person name="Yasuda M."/>
            <person name="Tabata S."/>
        </authorList>
    </citation>
    <scope>NUCLEOTIDE SEQUENCE [LARGE SCALE GENOMIC DNA]</scope>
    <source>
        <strain>PCC 7120 / SAG 25.82 / UTEX 2576</strain>
    </source>
</reference>
<accession>Q8YVQ2</accession>
<dbReference type="EMBL" id="BA000019">
    <property type="protein sequence ID" value="BAB73621.1"/>
    <property type="molecule type" value="Genomic_DNA"/>
</dbReference>
<dbReference type="PIR" id="AD2046">
    <property type="entry name" value="AD2046"/>
</dbReference>
<dbReference type="RefSeq" id="WP_010996086.1">
    <property type="nucleotide sequence ID" value="NZ_RSCN01000031.1"/>
</dbReference>
<dbReference type="PDB" id="2ZT9">
    <property type="method" value="X-ray"/>
    <property type="resolution" value="3.00 A"/>
    <property type="chains" value="E=1-31"/>
</dbReference>
<dbReference type="PDB" id="4H44">
    <property type="method" value="X-ray"/>
    <property type="resolution" value="2.70 A"/>
    <property type="chains" value="E=1-31"/>
</dbReference>
<dbReference type="PDB" id="4OGQ">
    <property type="method" value="X-ray"/>
    <property type="resolution" value="2.50 A"/>
    <property type="chains" value="E=1-31"/>
</dbReference>
<dbReference type="PDBsum" id="2ZT9"/>
<dbReference type="PDBsum" id="4H44"/>
<dbReference type="PDBsum" id="4OGQ"/>
<dbReference type="SMR" id="Q8YVQ2"/>
<dbReference type="DIP" id="DIP-61004N"/>
<dbReference type="IntAct" id="Q8YVQ2">
    <property type="interactions" value="1"/>
</dbReference>
<dbReference type="STRING" id="103690.gene:10493941"/>
<dbReference type="TCDB" id="3.D.3.5.6">
    <property type="family name" value="the proton-translocating quinol:cytochrome c reductase (qcr) superfamily"/>
</dbReference>
<dbReference type="GeneID" id="58721953"/>
<dbReference type="KEGG" id="ana:asl1922"/>
<dbReference type="OrthoDB" id="490372at2"/>
<dbReference type="EvolutionaryTrace" id="Q8YVQ2"/>
<dbReference type="Proteomes" id="UP000002483">
    <property type="component" value="Chromosome"/>
</dbReference>
<dbReference type="GO" id="GO:0009512">
    <property type="term" value="C:cytochrome b6f complex"/>
    <property type="evidence" value="ECO:0007669"/>
    <property type="project" value="InterPro"/>
</dbReference>
<dbReference type="GO" id="GO:0031676">
    <property type="term" value="C:plasma membrane-derived thylakoid membrane"/>
    <property type="evidence" value="ECO:0007669"/>
    <property type="project" value="UniProtKB-SubCell"/>
</dbReference>
<dbReference type="GO" id="GO:0045158">
    <property type="term" value="F:electron transporter, transferring electrons within cytochrome b6/f complex of photosystem II activity"/>
    <property type="evidence" value="ECO:0007669"/>
    <property type="project" value="UniProtKB-UniRule"/>
</dbReference>
<dbReference type="GO" id="GO:0015979">
    <property type="term" value="P:photosynthesis"/>
    <property type="evidence" value="ECO:0007669"/>
    <property type="project" value="UniProtKB-KW"/>
</dbReference>
<dbReference type="HAMAP" id="MF_00433">
    <property type="entry name" value="Cytb6_f_PetL"/>
    <property type="match status" value="1"/>
</dbReference>
<dbReference type="InterPro" id="IPR007802">
    <property type="entry name" value="Cyt_b6/f_cplx_su6"/>
</dbReference>
<dbReference type="NCBIfam" id="NF008824">
    <property type="entry name" value="PRK11874.1"/>
    <property type="match status" value="1"/>
</dbReference>
<dbReference type="Pfam" id="PF05115">
    <property type="entry name" value="PetL"/>
    <property type="match status" value="1"/>
</dbReference>
<dbReference type="SUPFAM" id="SSF103436">
    <property type="entry name" value="PetL subunit of the cytochrome b6f complex"/>
    <property type="match status" value="1"/>
</dbReference>
<name>PETL_NOSS1</name>
<proteinExistence type="evidence at protein level"/>
<organism>
    <name type="scientific">Nostoc sp. (strain PCC 7120 / SAG 25.82 / UTEX 2576)</name>
    <dbReference type="NCBI Taxonomy" id="103690"/>
    <lineage>
        <taxon>Bacteria</taxon>
        <taxon>Bacillati</taxon>
        <taxon>Cyanobacteriota</taxon>
        <taxon>Cyanophyceae</taxon>
        <taxon>Nostocales</taxon>
        <taxon>Nostocaceae</taxon>
        <taxon>Nostoc</taxon>
    </lineage>
</organism>
<keyword id="KW-0002">3D-structure</keyword>
<keyword id="KW-0249">Electron transport</keyword>
<keyword id="KW-0472">Membrane</keyword>
<keyword id="KW-0602">Photosynthesis</keyword>
<keyword id="KW-1185">Reference proteome</keyword>
<keyword id="KW-0793">Thylakoid</keyword>
<keyword id="KW-0812">Transmembrane</keyword>
<keyword id="KW-1133">Transmembrane helix</keyword>
<keyword id="KW-0813">Transport</keyword>
<gene>
    <name evidence="1" type="primary">petL</name>
    <name type="ordered locus">asl1922</name>
</gene>